<accession>O57523</accession>
<feature type="signal peptide" evidence="2">
    <location>
        <begin position="1"/>
        <end position="18"/>
    </location>
</feature>
<feature type="chain" id="PRO_0000425344" description="Proapolipoprotein A-I-1">
    <location>
        <begin position="19"/>
        <end position="262"/>
    </location>
</feature>
<feature type="chain" id="PRO_0000001966" description="Apolipoprotein A-I-1">
    <location>
        <begin position="24"/>
        <end position="262"/>
    </location>
</feature>
<feature type="repeat" description="1">
    <location>
        <begin position="64"/>
        <end position="85"/>
    </location>
</feature>
<feature type="repeat" description="2">
    <location>
        <begin position="87"/>
        <end position="107"/>
    </location>
</feature>
<feature type="repeat" description="3; half-length">
    <location>
        <begin position="108"/>
        <end position="118"/>
    </location>
</feature>
<feature type="repeat" description="4">
    <location>
        <begin position="119"/>
        <end position="140"/>
    </location>
</feature>
<feature type="repeat" description="5">
    <location>
        <begin position="141"/>
        <end position="162"/>
    </location>
</feature>
<feature type="repeat" description="6">
    <location>
        <begin position="163"/>
        <end position="184"/>
    </location>
</feature>
<feature type="repeat" description="7">
    <location>
        <begin position="185"/>
        <end position="206"/>
    </location>
</feature>
<feature type="repeat" description="8">
    <location>
        <begin position="207"/>
        <end position="228"/>
    </location>
</feature>
<feature type="repeat" description="9; half-length">
    <location>
        <begin position="229"/>
        <end position="239"/>
    </location>
</feature>
<feature type="repeat" description="10">
    <location>
        <begin position="240"/>
        <end position="262"/>
    </location>
</feature>
<feature type="region of interest" description="3 X approximate tandem repeats">
    <location>
        <begin position="32"/>
        <end position="63"/>
    </location>
</feature>
<feature type="region of interest" description="10 X approximate tandem repeats">
    <location>
        <begin position="64"/>
        <end position="262"/>
    </location>
</feature>
<name>APA11_ONCMY</name>
<proteinExistence type="evidence at transcript level"/>
<comment type="function">
    <text evidence="1">Participates in the reverse transport of cholesterol from tissues to the liver for excretion by promoting cholesterol efflux from tissues and by acting as a cofactor for the lecithin cholesterol acyltransferase (LCAT).</text>
</comment>
<comment type="subcellular location">
    <subcellularLocation>
        <location evidence="1">Secreted</location>
    </subcellularLocation>
</comment>
<comment type="similarity">
    <text evidence="3">Belongs to the apolipoprotein A1/A4/E family.</text>
</comment>
<protein>
    <recommendedName>
        <fullName>Apolipoprotein A-I-1</fullName>
        <shortName>Apo-AI-1</shortName>
        <shortName>ApoA-I-1</shortName>
    </recommendedName>
    <alternativeName>
        <fullName>Apolipoprotein A1-1</fullName>
    </alternativeName>
    <component>
        <recommendedName>
            <fullName>Proapolipoprotein A-I-1</fullName>
            <shortName>ProapoA-I-1</shortName>
        </recommendedName>
    </component>
</protein>
<sequence length="262" mass="29704">MKFLALALTILLAAGTQAFPMQADAPSQLEHVKAALSMYIAQVKLTAQRSIDLLDDTEYKEYKMQLTQSLDNLQQYADATSQSLAPYSEAFGTQLTDATAAVRAEVMKDVEELRSQLEPKRAELKEVLDKHIDEYRKKLEPLIKEHIELRRTEMEAFRAKMEPIVEELRAKVAINVEETKTKLMPIVEIVRAKLTERLEELRTLAAPYAEEYKEQMIKAVGEVREKVSPLSEDFKGQVGPAAEQAKQKLLAFYETISQAMKA</sequence>
<reference key="1">
    <citation type="journal article" date="1992" name="J. Lipid Res.">
        <title>Expression of rainbow trout apolipoprotein A-I genes in liver and hepatocellular carcinoma.</title>
        <authorList>
            <person name="Delcuve G.P."/>
            <person name="Sun J.M."/>
            <person name="Davie J.R."/>
        </authorList>
    </citation>
    <scope>NUCLEOTIDE SEQUENCE [MRNA]</scope>
    <source>
        <strain>Shasta</strain>
        <tissue>Liver</tissue>
    </source>
</reference>
<evidence type="ECO:0000250" key="1"/>
<evidence type="ECO:0000255" key="2"/>
<evidence type="ECO:0000305" key="3"/>
<organism>
    <name type="scientific">Oncorhynchus mykiss</name>
    <name type="common">Rainbow trout</name>
    <name type="synonym">Salmo gairdneri</name>
    <dbReference type="NCBI Taxonomy" id="8022"/>
    <lineage>
        <taxon>Eukaryota</taxon>
        <taxon>Metazoa</taxon>
        <taxon>Chordata</taxon>
        <taxon>Craniata</taxon>
        <taxon>Vertebrata</taxon>
        <taxon>Euteleostomi</taxon>
        <taxon>Actinopterygii</taxon>
        <taxon>Neopterygii</taxon>
        <taxon>Teleostei</taxon>
        <taxon>Protacanthopterygii</taxon>
        <taxon>Salmoniformes</taxon>
        <taxon>Salmonidae</taxon>
        <taxon>Salmoninae</taxon>
        <taxon>Oncorhynchus</taxon>
    </lineage>
</organism>
<keyword id="KW-0153">Cholesterol metabolism</keyword>
<keyword id="KW-0345">HDL</keyword>
<keyword id="KW-0443">Lipid metabolism</keyword>
<keyword id="KW-0445">Lipid transport</keyword>
<keyword id="KW-0677">Repeat</keyword>
<keyword id="KW-0964">Secreted</keyword>
<keyword id="KW-0732">Signal</keyword>
<keyword id="KW-0753">Steroid metabolism</keyword>
<keyword id="KW-1207">Sterol metabolism</keyword>
<keyword id="KW-0813">Transport</keyword>
<dbReference type="EMBL" id="AF042218">
    <property type="protein sequence ID" value="AAB96972.1"/>
    <property type="molecule type" value="mRNA"/>
</dbReference>
<dbReference type="RefSeq" id="NP_001117719.1">
    <property type="nucleotide sequence ID" value="NM_001124247.1"/>
</dbReference>
<dbReference type="SMR" id="O57523"/>
<dbReference type="Ensembl" id="ENSOMYT00000112053.2">
    <property type="protein sequence ID" value="ENSOMYP00000103327.1"/>
    <property type="gene ID" value="ENSOMYG00000046501.2"/>
</dbReference>
<dbReference type="GeneID" id="100135864"/>
<dbReference type="KEGG" id="omy:100135864"/>
<dbReference type="CTD" id="100135864"/>
<dbReference type="GeneTree" id="ENSGT00950000182929"/>
<dbReference type="OrthoDB" id="8727817at2759"/>
<dbReference type="Proteomes" id="UP000694395">
    <property type="component" value="Chromosome 27"/>
</dbReference>
<dbReference type="GO" id="GO:0042627">
    <property type="term" value="C:chylomicron"/>
    <property type="evidence" value="ECO:0007669"/>
    <property type="project" value="TreeGrafter"/>
</dbReference>
<dbReference type="GO" id="GO:0005615">
    <property type="term" value="C:extracellular space"/>
    <property type="evidence" value="ECO:0000314"/>
    <property type="project" value="AgBase"/>
</dbReference>
<dbReference type="GO" id="GO:1903561">
    <property type="term" value="C:extracellular vesicle"/>
    <property type="evidence" value="ECO:0007669"/>
    <property type="project" value="TreeGrafter"/>
</dbReference>
<dbReference type="GO" id="GO:0034364">
    <property type="term" value="C:high-density lipoprotein particle"/>
    <property type="evidence" value="ECO:0007669"/>
    <property type="project" value="UniProtKB-KW"/>
</dbReference>
<dbReference type="GO" id="GO:0034362">
    <property type="term" value="C:low-density lipoprotein particle"/>
    <property type="evidence" value="ECO:0007669"/>
    <property type="project" value="TreeGrafter"/>
</dbReference>
<dbReference type="GO" id="GO:0034361">
    <property type="term" value="C:very-low-density lipoprotein particle"/>
    <property type="evidence" value="ECO:0007669"/>
    <property type="project" value="TreeGrafter"/>
</dbReference>
<dbReference type="GO" id="GO:0120020">
    <property type="term" value="F:cholesterol transfer activity"/>
    <property type="evidence" value="ECO:0007669"/>
    <property type="project" value="TreeGrafter"/>
</dbReference>
<dbReference type="GO" id="GO:0060228">
    <property type="term" value="F:phosphatidylcholine-sterol O-acyltransferase activator activity"/>
    <property type="evidence" value="ECO:0007669"/>
    <property type="project" value="TreeGrafter"/>
</dbReference>
<dbReference type="GO" id="GO:0005543">
    <property type="term" value="F:phospholipid binding"/>
    <property type="evidence" value="ECO:0007669"/>
    <property type="project" value="TreeGrafter"/>
</dbReference>
<dbReference type="GO" id="GO:0055090">
    <property type="term" value="P:acylglycerol homeostasis"/>
    <property type="evidence" value="ECO:0007669"/>
    <property type="project" value="TreeGrafter"/>
</dbReference>
<dbReference type="GO" id="GO:0033344">
    <property type="term" value="P:cholesterol efflux"/>
    <property type="evidence" value="ECO:0007669"/>
    <property type="project" value="TreeGrafter"/>
</dbReference>
<dbReference type="GO" id="GO:0008203">
    <property type="term" value="P:cholesterol metabolic process"/>
    <property type="evidence" value="ECO:0007669"/>
    <property type="project" value="UniProtKB-KW"/>
</dbReference>
<dbReference type="GO" id="GO:0042157">
    <property type="term" value="P:lipoprotein metabolic process"/>
    <property type="evidence" value="ECO:0007669"/>
    <property type="project" value="InterPro"/>
</dbReference>
<dbReference type="GO" id="GO:0033700">
    <property type="term" value="P:phospholipid efflux"/>
    <property type="evidence" value="ECO:0007669"/>
    <property type="project" value="TreeGrafter"/>
</dbReference>
<dbReference type="GO" id="GO:0032496">
    <property type="term" value="P:response to lipopolysaccharide"/>
    <property type="evidence" value="ECO:0000314"/>
    <property type="project" value="AgBase"/>
</dbReference>
<dbReference type="FunFam" id="1.20.120.20:FF:000007">
    <property type="entry name" value="Apolipoprotein A-IV a"/>
    <property type="match status" value="1"/>
</dbReference>
<dbReference type="Gene3D" id="1.20.5.20">
    <property type="match status" value="1"/>
</dbReference>
<dbReference type="Gene3D" id="1.20.120.20">
    <property type="entry name" value="Apolipoprotein"/>
    <property type="match status" value="2"/>
</dbReference>
<dbReference type="InterPro" id="IPR000074">
    <property type="entry name" value="ApoA_E"/>
</dbReference>
<dbReference type="InterPro" id="IPR050163">
    <property type="entry name" value="Apolipoprotein_A1/A4/E"/>
</dbReference>
<dbReference type="PANTHER" id="PTHR18976">
    <property type="entry name" value="APOLIPOPROTEIN"/>
    <property type="match status" value="1"/>
</dbReference>
<dbReference type="PANTHER" id="PTHR18976:SF11">
    <property type="entry name" value="APOLIPOPROTEIN A-I"/>
    <property type="match status" value="1"/>
</dbReference>
<dbReference type="Pfam" id="PF01442">
    <property type="entry name" value="Apolipoprotein"/>
    <property type="match status" value="1"/>
</dbReference>
<dbReference type="SUPFAM" id="SSF58113">
    <property type="entry name" value="Apolipoprotein A-I"/>
    <property type="match status" value="1"/>
</dbReference>